<sequence length="510" mass="56981">MIWHVQNENFILDSTRIFMKAFHLLLFQGSFIFPECILIFGLILLLMIDLTSDQKDRPWFYFISSTSLVISITALLFRWREEPIISFSGNFQTNNFNEIFQFLILLCSTLCIPLSVEYIECTEMAITEFLLFVLTATLGGMFLCGANDLITIFVALECFSLCSYLLSGYTKRDLRSNEATMKYLLMGGASSSILVYGFSWLYGLSGGEIELQEIVNGLINTQMYNSPGISIALIFITVGLGFKLSLAPFHQWTPDVYEGSPTPVVAFLSVTSKVAALALATRILDIPFYFSSNEWHLLLEILAILSMILGNLLAITQTSMKRMLAYSSIGQIGYVIIGIIVGDSNDGYASMITYMLFYISMNLGTFACIVLFGLRTGTDNIRDYAGLYTKDPFLALSLALCLLSLGGLPPLAGFFGKLYLFWCGWQAGLYFLVSIGLLTSVLSIYYYLKIVKLLMTGRNQEITPYVRNYRRSPLRSNNSIELSMTVCVIASTILGISMNPILAIAQDTLF</sequence>
<accession>P0CD22</accession>
<accession>P12125</accession>
<geneLocation type="chloroplast"/>
<comment type="function">
    <text evidence="1">NDH shuttles electrons from NAD(P)H:plastoquinone, via FMN and iron-sulfur (Fe-S) centers, to quinones in the photosynthetic chain and possibly in a chloroplast respiratory chain. The immediate electron acceptor for the enzyme in this species is believed to be plastoquinone. Couples the redox reaction to proton translocation, and thus conserves the redox energy in a proton gradient.</text>
</comment>
<comment type="catalytic activity">
    <reaction evidence="1">
        <text>a plastoquinone + NADH + (n+1) H(+)(in) = a plastoquinol + NAD(+) + n H(+)(out)</text>
        <dbReference type="Rhea" id="RHEA:42608"/>
        <dbReference type="Rhea" id="RHEA-COMP:9561"/>
        <dbReference type="Rhea" id="RHEA-COMP:9562"/>
        <dbReference type="ChEBI" id="CHEBI:15378"/>
        <dbReference type="ChEBI" id="CHEBI:17757"/>
        <dbReference type="ChEBI" id="CHEBI:57540"/>
        <dbReference type="ChEBI" id="CHEBI:57945"/>
        <dbReference type="ChEBI" id="CHEBI:62192"/>
    </reaction>
</comment>
<comment type="catalytic activity">
    <reaction evidence="1">
        <text>a plastoquinone + NADPH + (n+1) H(+)(in) = a plastoquinol + NADP(+) + n H(+)(out)</text>
        <dbReference type="Rhea" id="RHEA:42612"/>
        <dbReference type="Rhea" id="RHEA-COMP:9561"/>
        <dbReference type="Rhea" id="RHEA-COMP:9562"/>
        <dbReference type="ChEBI" id="CHEBI:15378"/>
        <dbReference type="ChEBI" id="CHEBI:17757"/>
        <dbReference type="ChEBI" id="CHEBI:57783"/>
        <dbReference type="ChEBI" id="CHEBI:58349"/>
        <dbReference type="ChEBI" id="CHEBI:62192"/>
    </reaction>
</comment>
<comment type="subunit">
    <text evidence="1">NDH is composed of at least 16 different subunits, 5 of which are encoded in the nucleus.</text>
</comment>
<comment type="subcellular location">
    <subcellularLocation>
        <location evidence="1">Plastid</location>
        <location evidence="1">Chloroplast thylakoid membrane</location>
        <topology evidence="1">Multi-pass membrane protein</topology>
    </subcellularLocation>
</comment>
<comment type="RNA editing">
    <location>
        <position position="156" evidence="2 3"/>
    </location>
    <location>
        <position position="196" evidence="2 3"/>
    </location>
    <location>
        <position position="204" evidence="2 3"/>
    </location>
    <location>
        <position position="235" evidence="2 3"/>
    </location>
    <location>
        <position position="246" evidence="2 3"/>
    </location>
    <location>
        <position position="277" evidence="2 3"/>
    </location>
    <location>
        <position position="279" evidence="2 3"/>
    </location>
    <location>
        <position position="494" evidence="2 3"/>
    </location>
</comment>
<comment type="similarity">
    <text evidence="1">Belongs to the complex I subunit 2 family.</text>
</comment>
<dbReference type="EC" id="7.1.1.-" evidence="1"/>
<dbReference type="EMBL" id="X15901">
    <property type="protein sequence ID" value="CAA33920.1"/>
    <property type="status" value="ALT_SEQ"/>
    <property type="molecule type" value="Genomic_DNA"/>
</dbReference>
<dbReference type="EMBL" id="AY522330">
    <property type="status" value="NOT_ANNOTATED_CDS"/>
    <property type="molecule type" value="Genomic_DNA"/>
</dbReference>
<dbReference type="PIR" id="JQ0275">
    <property type="entry name" value="DERZN2"/>
</dbReference>
<dbReference type="SMR" id="P0CD22"/>
<dbReference type="FunCoup" id="P0CD22">
    <property type="interactions" value="18"/>
</dbReference>
<dbReference type="STRING" id="39947.P0CD22"/>
<dbReference type="PaxDb" id="39947-P0CD22"/>
<dbReference type="KEGG" id="dosa:ndhB.1"/>
<dbReference type="KEGG" id="osa:3131396"/>
<dbReference type="KEGG" id="osa:3131397"/>
<dbReference type="eggNOG" id="KOG4668">
    <property type="taxonomic scope" value="Eukaryota"/>
</dbReference>
<dbReference type="InParanoid" id="P0CD22"/>
<dbReference type="OrthoDB" id="783395at2759"/>
<dbReference type="Proteomes" id="UP000059680">
    <property type="component" value="Chloroplast"/>
</dbReference>
<dbReference type="GO" id="GO:0009535">
    <property type="term" value="C:chloroplast thylakoid membrane"/>
    <property type="evidence" value="ECO:0007669"/>
    <property type="project" value="UniProtKB-SubCell"/>
</dbReference>
<dbReference type="GO" id="GO:0008137">
    <property type="term" value="F:NADH dehydrogenase (ubiquinone) activity"/>
    <property type="evidence" value="ECO:0007669"/>
    <property type="project" value="InterPro"/>
</dbReference>
<dbReference type="GO" id="GO:0048038">
    <property type="term" value="F:quinone binding"/>
    <property type="evidence" value="ECO:0007669"/>
    <property type="project" value="UniProtKB-KW"/>
</dbReference>
<dbReference type="GO" id="GO:0042773">
    <property type="term" value="P:ATP synthesis coupled electron transport"/>
    <property type="evidence" value="ECO:0007669"/>
    <property type="project" value="InterPro"/>
</dbReference>
<dbReference type="GO" id="GO:0019684">
    <property type="term" value="P:photosynthesis, light reaction"/>
    <property type="evidence" value="ECO:0007669"/>
    <property type="project" value="UniProtKB-UniRule"/>
</dbReference>
<dbReference type="HAMAP" id="MF_00445">
    <property type="entry name" value="NDH1_NuoN_1"/>
    <property type="match status" value="1"/>
</dbReference>
<dbReference type="InterPro" id="IPR010096">
    <property type="entry name" value="NADH-Q_OxRdtase_suN/2"/>
</dbReference>
<dbReference type="InterPro" id="IPR001750">
    <property type="entry name" value="ND/Mrp_TM"/>
</dbReference>
<dbReference type="InterPro" id="IPR045693">
    <property type="entry name" value="Ndh2_N"/>
</dbReference>
<dbReference type="NCBIfam" id="TIGR01770">
    <property type="entry name" value="NDH_I_N"/>
    <property type="match status" value="1"/>
</dbReference>
<dbReference type="NCBIfam" id="NF002701">
    <property type="entry name" value="PRK02504.1"/>
    <property type="match status" value="1"/>
</dbReference>
<dbReference type="PANTHER" id="PTHR22773">
    <property type="entry name" value="NADH DEHYDROGENASE"/>
    <property type="match status" value="1"/>
</dbReference>
<dbReference type="Pfam" id="PF19530">
    <property type="entry name" value="Ndh2_N"/>
    <property type="match status" value="1"/>
</dbReference>
<dbReference type="Pfam" id="PF00361">
    <property type="entry name" value="Proton_antipo_M"/>
    <property type="match status" value="1"/>
</dbReference>
<dbReference type="PRINTS" id="PR01434">
    <property type="entry name" value="NADHDHGNASE5"/>
</dbReference>
<gene>
    <name evidence="1" type="primary">ndhB1</name>
    <name type="ORF">Nip208</name>
</gene>
<keyword id="KW-0150">Chloroplast</keyword>
<keyword id="KW-0472">Membrane</keyword>
<keyword id="KW-0520">NAD</keyword>
<keyword id="KW-0521">NADP</keyword>
<keyword id="KW-0934">Plastid</keyword>
<keyword id="KW-0618">Plastoquinone</keyword>
<keyword id="KW-0874">Quinone</keyword>
<keyword id="KW-1185">Reference proteome</keyword>
<keyword id="KW-0691">RNA editing</keyword>
<keyword id="KW-0793">Thylakoid</keyword>
<keyword id="KW-1278">Translocase</keyword>
<keyword id="KW-0812">Transmembrane</keyword>
<keyword id="KW-1133">Transmembrane helix</keyword>
<keyword id="KW-0813">Transport</keyword>
<name>NU2C1_ORYSJ</name>
<protein>
    <recommendedName>
        <fullName evidence="1">NAD(P)H-quinone oxidoreductase subunit 2 A, chloroplastic</fullName>
        <ecNumber evidence="1">7.1.1.-</ecNumber>
    </recommendedName>
    <alternativeName>
        <fullName evidence="1">NAD(P)H dehydrogenase, subunit 2 A</fullName>
    </alternativeName>
    <alternativeName>
        <fullName evidence="1">NADH-plastoquinone oxidoreductase subunit 2 A</fullName>
    </alternativeName>
</protein>
<evidence type="ECO:0000255" key="1">
    <source>
        <dbReference type="HAMAP-Rule" id="MF_00445"/>
    </source>
</evidence>
<evidence type="ECO:0000269" key="2">
    <source>
    </source>
</evidence>
<evidence type="ECO:0000269" key="3">
    <source>
    </source>
</evidence>
<organism>
    <name type="scientific">Oryza sativa subsp. japonica</name>
    <name type="common">Rice</name>
    <dbReference type="NCBI Taxonomy" id="39947"/>
    <lineage>
        <taxon>Eukaryota</taxon>
        <taxon>Viridiplantae</taxon>
        <taxon>Streptophyta</taxon>
        <taxon>Embryophyta</taxon>
        <taxon>Tracheophyta</taxon>
        <taxon>Spermatophyta</taxon>
        <taxon>Magnoliopsida</taxon>
        <taxon>Liliopsida</taxon>
        <taxon>Poales</taxon>
        <taxon>Poaceae</taxon>
        <taxon>BOP clade</taxon>
        <taxon>Oryzoideae</taxon>
        <taxon>Oryzeae</taxon>
        <taxon>Oryzinae</taxon>
        <taxon>Oryza</taxon>
        <taxon>Oryza sativa</taxon>
    </lineage>
</organism>
<feature type="chain" id="PRO_0000117672" description="NAD(P)H-quinone oxidoreductase subunit 2 A, chloroplastic">
    <location>
        <begin position="1"/>
        <end position="510"/>
    </location>
</feature>
<feature type="transmembrane region" description="Helical" evidence="1">
    <location>
        <begin position="31"/>
        <end position="51"/>
    </location>
</feature>
<feature type="transmembrane region" description="Helical" evidence="1">
    <location>
        <begin position="59"/>
        <end position="79"/>
    </location>
</feature>
<feature type="transmembrane region" description="Helical" evidence="1">
    <location>
        <begin position="99"/>
        <end position="119"/>
    </location>
</feature>
<feature type="transmembrane region" description="Helical" evidence="1">
    <location>
        <begin position="124"/>
        <end position="144"/>
    </location>
</feature>
<feature type="transmembrane region" description="Helical" evidence="1">
    <location>
        <begin position="149"/>
        <end position="169"/>
    </location>
</feature>
<feature type="transmembrane region" description="Helical" evidence="1">
    <location>
        <begin position="184"/>
        <end position="204"/>
    </location>
</feature>
<feature type="transmembrane region" description="Helical" evidence="1">
    <location>
        <begin position="229"/>
        <end position="249"/>
    </location>
</feature>
<feature type="transmembrane region" description="Helical" evidence="1">
    <location>
        <begin position="261"/>
        <end position="281"/>
    </location>
</feature>
<feature type="transmembrane region" description="Helical" evidence="1">
    <location>
        <begin position="295"/>
        <end position="315"/>
    </location>
</feature>
<feature type="transmembrane region" description="Helical" evidence="1">
    <location>
        <begin position="323"/>
        <end position="343"/>
    </location>
</feature>
<feature type="transmembrane region" description="Helical" evidence="1">
    <location>
        <begin position="354"/>
        <end position="374"/>
    </location>
</feature>
<feature type="transmembrane region" description="Helical" evidence="1">
    <location>
        <begin position="395"/>
        <end position="415"/>
    </location>
</feature>
<feature type="transmembrane region" description="Helical" evidence="1">
    <location>
        <begin position="418"/>
        <end position="438"/>
    </location>
</feature>
<feature type="transmembrane region" description="Helical" evidence="1">
    <location>
        <begin position="484"/>
        <end position="504"/>
    </location>
</feature>
<proteinExistence type="evidence at transcript level"/>
<reference key="1">
    <citation type="journal article" date="1995" name="Plant Mol. Biol.">
        <title>Editing of the chloroplast ndhB encoded transcript shows divergence between closely related members of the grass family (Poaceae).</title>
        <authorList>
            <person name="Freyer R."/>
            <person name="Lopez C."/>
            <person name="Maier R.M."/>
            <person name="Martin M."/>
            <person name="Sabater B."/>
            <person name="Koessel H."/>
        </authorList>
    </citation>
    <scope>NUCLEOTIDE SEQUENCE [GENOMIC DNA]</scope>
    <scope>RNA EDITING</scope>
</reference>
<reference key="2">
    <citation type="journal article" date="2000" name="Mol. Gen. Genet.">
        <title>Conservation of RNA editing between rice and maize plastids: are most editing events dispensable?</title>
        <authorList>
            <person name="Corneille S."/>
            <person name="Lutz K."/>
            <person name="Maliga P."/>
        </authorList>
    </citation>
    <scope>NUCLEOTIDE SEQUENCE [GENOMIC DNA]</scope>
    <scope>RNA EDITING</scope>
    <source>
        <strain>cv. Taipei 309</strain>
    </source>
</reference>
<reference key="3">
    <citation type="journal article" date="1989" name="Mol. Gen. Genet.">
        <title>The complete sequence of the rice (Oryza sativa) chloroplast genome: intermolecular recombination between distinct tRNA genes accounts for a major plastid DNA inversion during the evolution of the cereals.</title>
        <authorList>
            <person name="Hiratsuka J."/>
            <person name="Shimada H."/>
            <person name="Whittier R."/>
            <person name="Ishibashi T."/>
            <person name="Sakamoto M."/>
            <person name="Mori M."/>
            <person name="Kondo C."/>
            <person name="Honji Y."/>
            <person name="Sun C.-R."/>
            <person name="Meng B.-Y."/>
            <person name="Li Y.-Q."/>
            <person name="Kanno A."/>
            <person name="Nishizawa Y."/>
            <person name="Hirai A."/>
            <person name="Shinozaki K."/>
            <person name="Sugiura M."/>
        </authorList>
    </citation>
    <scope>NUCLEOTIDE SEQUENCE [LARGE SCALE GENOMIC DNA]</scope>
    <source>
        <strain>cv. Nipponbare</strain>
    </source>
</reference>
<reference key="4">
    <citation type="journal article" date="2004" name="Plant Physiol.">
        <title>A comparison of rice chloroplast genomes.</title>
        <authorList>
            <person name="Tang J."/>
            <person name="Xia H."/>
            <person name="Cao M."/>
            <person name="Zhang X."/>
            <person name="Zeng W."/>
            <person name="Hu S."/>
            <person name="Tong W."/>
            <person name="Wang J."/>
            <person name="Wang J."/>
            <person name="Yu J."/>
            <person name="Yang H."/>
            <person name="Zhu L."/>
        </authorList>
    </citation>
    <scope>NUCLEOTIDE SEQUENCE [LARGE SCALE GENOMIC DNA]</scope>
    <source>
        <strain>cv. Nipponbare</strain>
    </source>
</reference>